<comment type="function">
    <text evidence="1">Protein S19 forms a complex with S13 that binds strongly to the 16S ribosomal RNA.</text>
</comment>
<comment type="similarity">
    <text evidence="1">Belongs to the universal ribosomal protein uS19 family.</text>
</comment>
<feature type="chain" id="PRO_0000129905" description="Small ribosomal subunit protein uS19">
    <location>
        <begin position="1"/>
        <end position="92"/>
    </location>
</feature>
<reference key="1">
    <citation type="journal article" date="2003" name="Mol. Microbiol.">
        <title>Genome-based analysis of virulence genes in a non-biofilm-forming Staphylococcus epidermidis strain (ATCC 12228).</title>
        <authorList>
            <person name="Zhang Y.-Q."/>
            <person name="Ren S.-X."/>
            <person name="Li H.-L."/>
            <person name="Wang Y.-X."/>
            <person name="Fu G."/>
            <person name="Yang J."/>
            <person name="Qin Z.-Q."/>
            <person name="Miao Y.-G."/>
            <person name="Wang W.-Y."/>
            <person name="Chen R.-S."/>
            <person name="Shen Y."/>
            <person name="Chen Z."/>
            <person name="Yuan Z.-H."/>
            <person name="Zhao G.-P."/>
            <person name="Qu D."/>
            <person name="Danchin A."/>
            <person name="Wen Y.-M."/>
        </authorList>
    </citation>
    <scope>NUCLEOTIDE SEQUENCE [LARGE SCALE GENOMIC DNA]</scope>
    <source>
        <strain>ATCC 12228 / FDA PCI 1200</strain>
    </source>
</reference>
<name>RS19_STAES</name>
<organism>
    <name type="scientific">Staphylococcus epidermidis (strain ATCC 12228 / FDA PCI 1200)</name>
    <dbReference type="NCBI Taxonomy" id="176280"/>
    <lineage>
        <taxon>Bacteria</taxon>
        <taxon>Bacillati</taxon>
        <taxon>Bacillota</taxon>
        <taxon>Bacilli</taxon>
        <taxon>Bacillales</taxon>
        <taxon>Staphylococcaceae</taxon>
        <taxon>Staphylococcus</taxon>
    </lineage>
</organism>
<protein>
    <recommendedName>
        <fullName evidence="1">Small ribosomal subunit protein uS19</fullName>
    </recommendedName>
    <alternativeName>
        <fullName evidence="2">30S ribosomal protein S19</fullName>
    </alternativeName>
</protein>
<dbReference type="EMBL" id="AE015929">
    <property type="protein sequence ID" value="AAO05461.1"/>
    <property type="molecule type" value="Genomic_DNA"/>
</dbReference>
<dbReference type="RefSeq" id="NP_765375.1">
    <property type="nucleotide sequence ID" value="NC_004461.1"/>
</dbReference>
<dbReference type="RefSeq" id="WP_001829710.1">
    <property type="nucleotide sequence ID" value="NZ_WBME01000007.1"/>
</dbReference>
<dbReference type="SMR" id="Q8CRG4"/>
<dbReference type="GeneID" id="93780195"/>
<dbReference type="KEGG" id="sep:SE_1820"/>
<dbReference type="PATRIC" id="fig|176280.10.peg.1776"/>
<dbReference type="eggNOG" id="COG0185">
    <property type="taxonomic scope" value="Bacteria"/>
</dbReference>
<dbReference type="HOGENOM" id="CLU_144911_0_1_9"/>
<dbReference type="OrthoDB" id="9797833at2"/>
<dbReference type="PRO" id="PR:Q8CRG4"/>
<dbReference type="Proteomes" id="UP000001411">
    <property type="component" value="Chromosome"/>
</dbReference>
<dbReference type="GO" id="GO:0005737">
    <property type="term" value="C:cytoplasm"/>
    <property type="evidence" value="ECO:0007669"/>
    <property type="project" value="UniProtKB-ARBA"/>
</dbReference>
<dbReference type="GO" id="GO:0015935">
    <property type="term" value="C:small ribosomal subunit"/>
    <property type="evidence" value="ECO:0007669"/>
    <property type="project" value="InterPro"/>
</dbReference>
<dbReference type="GO" id="GO:0019843">
    <property type="term" value="F:rRNA binding"/>
    <property type="evidence" value="ECO:0007669"/>
    <property type="project" value="UniProtKB-UniRule"/>
</dbReference>
<dbReference type="GO" id="GO:0003735">
    <property type="term" value="F:structural constituent of ribosome"/>
    <property type="evidence" value="ECO:0007669"/>
    <property type="project" value="InterPro"/>
</dbReference>
<dbReference type="GO" id="GO:0000028">
    <property type="term" value="P:ribosomal small subunit assembly"/>
    <property type="evidence" value="ECO:0007669"/>
    <property type="project" value="TreeGrafter"/>
</dbReference>
<dbReference type="GO" id="GO:0006412">
    <property type="term" value="P:translation"/>
    <property type="evidence" value="ECO:0007669"/>
    <property type="project" value="UniProtKB-UniRule"/>
</dbReference>
<dbReference type="FunFam" id="3.30.860.10:FF:000001">
    <property type="entry name" value="30S ribosomal protein S19"/>
    <property type="match status" value="1"/>
</dbReference>
<dbReference type="Gene3D" id="3.30.860.10">
    <property type="entry name" value="30s Ribosomal Protein S19, Chain A"/>
    <property type="match status" value="1"/>
</dbReference>
<dbReference type="HAMAP" id="MF_00531">
    <property type="entry name" value="Ribosomal_uS19"/>
    <property type="match status" value="1"/>
</dbReference>
<dbReference type="InterPro" id="IPR002222">
    <property type="entry name" value="Ribosomal_uS19"/>
</dbReference>
<dbReference type="InterPro" id="IPR005732">
    <property type="entry name" value="Ribosomal_uS19_bac-type"/>
</dbReference>
<dbReference type="InterPro" id="IPR020934">
    <property type="entry name" value="Ribosomal_uS19_CS"/>
</dbReference>
<dbReference type="InterPro" id="IPR023575">
    <property type="entry name" value="Ribosomal_uS19_SF"/>
</dbReference>
<dbReference type="NCBIfam" id="TIGR01050">
    <property type="entry name" value="rpsS_bact"/>
    <property type="match status" value="1"/>
</dbReference>
<dbReference type="PANTHER" id="PTHR11880">
    <property type="entry name" value="RIBOSOMAL PROTEIN S19P FAMILY MEMBER"/>
    <property type="match status" value="1"/>
</dbReference>
<dbReference type="PANTHER" id="PTHR11880:SF8">
    <property type="entry name" value="SMALL RIBOSOMAL SUBUNIT PROTEIN US19M"/>
    <property type="match status" value="1"/>
</dbReference>
<dbReference type="Pfam" id="PF00203">
    <property type="entry name" value="Ribosomal_S19"/>
    <property type="match status" value="1"/>
</dbReference>
<dbReference type="PIRSF" id="PIRSF002144">
    <property type="entry name" value="Ribosomal_S19"/>
    <property type="match status" value="1"/>
</dbReference>
<dbReference type="PRINTS" id="PR00975">
    <property type="entry name" value="RIBOSOMALS19"/>
</dbReference>
<dbReference type="SUPFAM" id="SSF54570">
    <property type="entry name" value="Ribosomal protein S19"/>
    <property type="match status" value="1"/>
</dbReference>
<dbReference type="PROSITE" id="PS00323">
    <property type="entry name" value="RIBOSOMAL_S19"/>
    <property type="match status" value="1"/>
</dbReference>
<gene>
    <name evidence="1" type="primary">rpsS</name>
    <name type="ordered locus">SE_1820</name>
</gene>
<proteinExistence type="inferred from homology"/>
<sequence>MARSIKKGPFVDDHLMKKVEAQDGSEKKQVIKTWSRRSTIFPNFIGHTFAVYDGRKHVPVYVTEDMVGHKLGEFAPTRTFKGHAADDKKTRR</sequence>
<keyword id="KW-0687">Ribonucleoprotein</keyword>
<keyword id="KW-0689">Ribosomal protein</keyword>
<keyword id="KW-0694">RNA-binding</keyword>
<keyword id="KW-0699">rRNA-binding</keyword>
<accession>Q8CRG4</accession>
<evidence type="ECO:0000255" key="1">
    <source>
        <dbReference type="HAMAP-Rule" id="MF_00531"/>
    </source>
</evidence>
<evidence type="ECO:0000305" key="2"/>